<keyword id="KW-0053">Apoptosis</keyword>
<keyword id="KW-0903">Direct protein sequencing</keyword>
<keyword id="KW-1015">Disulfide bond</keyword>
<keyword id="KW-0325">Glycoprotein</keyword>
<keyword id="KW-0340">Growth factor binding</keyword>
<keyword id="KW-0539">Nucleus</keyword>
<keyword id="KW-0597">Phosphoprotein</keyword>
<keyword id="KW-1185">Reference proteome</keyword>
<keyword id="KW-0964">Secreted</keyword>
<keyword id="KW-0732">Signal</keyword>
<gene>
    <name type="primary">IGFBP3</name>
</gene>
<proteinExistence type="evidence at protein level"/>
<sequence>MQRARPALWAAALIALALLRGPPAARAGSGAAGTGPVVRCEPCDARALAQCAPPPAAPPCAELVREPGCGCCLTCALREGQACGVYTERCGAGLRCQPPPGEPRPLQALLDGRGICANASAAGRLRAYLLPAPPAPGNGSESEEDRSVDSMENQALPSTHRVPDSKLHSVHTKMDVIKKGHAKDSQRYKVDYESQSTDTQNFSSESKRETEYGPCRREMEDTLNHLKFLNMLSPRGIHIPNCDKKGFYKKKQCRPSKGRKRGFCWCVDKYGQPLPGFDVKGKGDVHCYSMESK</sequence>
<comment type="function">
    <text evidence="2">Multifunctional protein that plays a critical role in regulating the availability of IGFs such as IGF1 and IGF2 to their receptors and thereby regulates IGF-mediated cellular processes including proliferation, differentiation, and apoptosis in a cell-type specific manner. Also exhibits IGF-independent antiproliferative and apoptotic effects mediated by its receptor TMEM219/IGFBP-3R. Inhibits the positive effect of humanin on insulin sensitivity. Promotes testicular germ cell apoptosis. Acts via LRP-1/alpha2M receptor, also known as TGF-beta type V receptor, to mediate cell growth inhibition independent of IGF1. Mechanistically, induces serine-specific dephosphorylation of IRS1 or IRS2 upon ligation to its receptor, leading to the inhibitory cascade. In the nucleus, interacts with transcription factors such as retinoid X receptor-alpha/RXRA to regulate transcriptional signaling and apoptosis.</text>
</comment>
<comment type="subunit">
    <text evidence="1 2">Interacts with XLKD1 (By similarity). Binds IGF2 more than IGF1. Forms a ternary complex of about 140 to 150 kDa with IGF1 or IGF2 and a 85 kDa glycoprotein (ALS). Interacts with humanin; humanin competes with importin KPNB1 for binding to IGFBP3, blocking IGFBP3 nuclear import and IGFBP3-mediated apoptosis. Interacts with TMEM219. Interacts with RXRA; this interaction modulates the transcriptional activity of RXRA. Interacts with LRP1; this interaction mediates cell growth inhibition independent of IGF1 (By similarity).</text>
</comment>
<comment type="subcellular location">
    <subcellularLocation>
        <location evidence="2">Secreted</location>
    </subcellularLocation>
    <subcellularLocation>
        <location evidence="2">Nucleus</location>
    </subcellularLocation>
</comment>
<comment type="PTM">
    <text evidence="2">Phosphorylated by FAM20C in the extracellular medium. Phosphorylated by CK2; resulting in decreased nuclear localization.</text>
</comment>
<reference key="1">
    <citation type="journal article" date="2003" name="J. Endocrinol.">
        <title>Effect of recombinant porcine IGF-binding protein-3 on proliferation of embryonic porcine myogenic cell cultures in the presence and absence of IGF-I.</title>
        <authorList>
            <person name="Pampusch M.S."/>
            <person name="Kamanga-Sollo E."/>
            <person name="White M.E."/>
            <person name="Hathaway M.R."/>
            <person name="Dayton W.R."/>
        </authorList>
    </citation>
    <scope>NUCLEOTIDE SEQUENCE [MRNA]</scope>
    <source>
        <tissue>Liver</tissue>
    </source>
</reference>
<reference key="2">
    <citation type="journal article" date="2004" name="Endocrinology">
        <title>Insulin-like growth factor-binding protein-3 in porcine ovarian granulosa cells: gene cloning, promoter mapping, and follicle-stimulating hormone regulation.</title>
        <authorList>
            <person name="Ongeri E.M."/>
            <person name="Zhu Q."/>
            <person name="Verderame M.F."/>
            <person name="Hammond J.M."/>
        </authorList>
    </citation>
    <scope>NUCLEOTIDE SEQUENCE [GENOMIC DNA]</scope>
</reference>
<reference key="3">
    <citation type="journal article" date="1990" name="J. Biol. Chem.">
        <title>Structural characterization of a follicle-stimulating hormone action inhibitor in porcine ovarian follicular fluid. Its identification as the insulin-like growth factor-binding protein.</title>
        <authorList>
            <person name="Shimasaki S."/>
            <person name="Shimonaka M."/>
            <person name="Ui M."/>
            <person name="Inouye S."/>
            <person name="Shibata F."/>
            <person name="Ling N."/>
        </authorList>
    </citation>
    <scope>NUCLEOTIDE SEQUENCE [MRNA] OF 28-293</scope>
</reference>
<reference key="4">
    <citation type="journal article" date="1991" name="Biochem. Biophys. Res. Commun.">
        <title>Identification and NH2-terminal amino acid sequence of three insulin-like growth factor-binding proteins in porcine serum.</title>
        <authorList>
            <person name="Coleman M.E."/>
            <person name="Pan Y.-C.E."/>
            <person name="Etherton T.D."/>
        </authorList>
    </citation>
    <scope>PROTEIN SEQUENCE OF 28-42</scope>
</reference>
<reference key="5">
    <citation type="submission" date="2003-09" db="EMBL/GenBank/DDBJ databases">
        <title>Study on SNPs of porcine IGFBP-3 gene.</title>
        <authorList>
            <person name="Liu D."/>
            <person name="Zhang Y."/>
            <person name="Zhang X."/>
            <person name="Yang G."/>
        </authorList>
    </citation>
    <scope>NUCLEOTIDE SEQUENCE [GENOMIC DNA] OF 143-293</scope>
</reference>
<organism>
    <name type="scientific">Sus scrofa</name>
    <name type="common">Pig</name>
    <dbReference type="NCBI Taxonomy" id="9823"/>
    <lineage>
        <taxon>Eukaryota</taxon>
        <taxon>Metazoa</taxon>
        <taxon>Chordata</taxon>
        <taxon>Craniata</taxon>
        <taxon>Vertebrata</taxon>
        <taxon>Euteleostomi</taxon>
        <taxon>Mammalia</taxon>
        <taxon>Eutheria</taxon>
        <taxon>Laurasiatheria</taxon>
        <taxon>Artiodactyla</taxon>
        <taxon>Suina</taxon>
        <taxon>Suidae</taxon>
        <taxon>Sus</taxon>
    </lineage>
</organism>
<protein>
    <recommendedName>
        <fullName>Insulin-like growth factor-binding protein 3</fullName>
        <shortName>IBP-3</shortName>
        <shortName>IGF-binding protein 3</shortName>
        <shortName>IGFBP-3</shortName>
    </recommendedName>
</protein>
<name>IBP3_PIG</name>
<accession>P16611</accession>
<accession>Q6S6K2</accession>
<accession>Q9TTI0</accession>
<dbReference type="EMBL" id="AF085482">
    <property type="protein sequence ID" value="AAF23229.1"/>
    <property type="molecule type" value="mRNA"/>
</dbReference>
<dbReference type="EMBL" id="AY464121">
    <property type="protein sequence ID" value="AAR87008.1"/>
    <property type="molecule type" value="Genomic_DNA"/>
</dbReference>
<dbReference type="EMBL" id="J05228">
    <property type="protein sequence ID" value="AAA31054.1"/>
    <property type="molecule type" value="mRNA"/>
</dbReference>
<dbReference type="EMBL" id="AY422045">
    <property type="protein sequence ID" value="AAQ97624.1"/>
    <property type="molecule type" value="Genomic_DNA"/>
</dbReference>
<dbReference type="PIR" id="A35037">
    <property type="entry name" value="A35037"/>
</dbReference>
<dbReference type="PIR" id="JH0516">
    <property type="entry name" value="JH0516"/>
</dbReference>
<dbReference type="RefSeq" id="NP_001005156.1">
    <property type="nucleotide sequence ID" value="NM_001005156.1"/>
</dbReference>
<dbReference type="SMR" id="P16611"/>
<dbReference type="FunCoup" id="P16611">
    <property type="interactions" value="140"/>
</dbReference>
<dbReference type="MEROPS" id="I31.952"/>
<dbReference type="GlyCosmos" id="P16611">
    <property type="glycosylation" value="3 sites, No reported glycans"/>
</dbReference>
<dbReference type="GlyGen" id="P16611">
    <property type="glycosylation" value="3 sites"/>
</dbReference>
<dbReference type="PaxDb" id="9823-ENSSSCP00000017719"/>
<dbReference type="GeneID" id="448812"/>
<dbReference type="KEGG" id="ssc:448812"/>
<dbReference type="CTD" id="3486"/>
<dbReference type="eggNOG" id="ENOG502QWC0">
    <property type="taxonomic scope" value="Eukaryota"/>
</dbReference>
<dbReference type="InParanoid" id="P16611"/>
<dbReference type="OMA" id="CKPLVPD"/>
<dbReference type="OrthoDB" id="6068400at2759"/>
<dbReference type="Proteomes" id="UP000008227">
    <property type="component" value="Unplaced"/>
</dbReference>
<dbReference type="Proteomes" id="UP000314985">
    <property type="component" value="Unplaced"/>
</dbReference>
<dbReference type="Proteomes" id="UP000694570">
    <property type="component" value="Unplaced"/>
</dbReference>
<dbReference type="Proteomes" id="UP000694571">
    <property type="component" value="Unplaced"/>
</dbReference>
<dbReference type="Proteomes" id="UP000694720">
    <property type="component" value="Unplaced"/>
</dbReference>
<dbReference type="Proteomes" id="UP000694722">
    <property type="component" value="Unplaced"/>
</dbReference>
<dbReference type="Proteomes" id="UP000694723">
    <property type="component" value="Unplaced"/>
</dbReference>
<dbReference type="Proteomes" id="UP000694724">
    <property type="component" value="Unplaced"/>
</dbReference>
<dbReference type="Proteomes" id="UP000694725">
    <property type="component" value="Unplaced"/>
</dbReference>
<dbReference type="Proteomes" id="UP000694726">
    <property type="component" value="Unplaced"/>
</dbReference>
<dbReference type="Proteomes" id="UP000694727">
    <property type="component" value="Unplaced"/>
</dbReference>
<dbReference type="Proteomes" id="UP000694728">
    <property type="component" value="Unplaced"/>
</dbReference>
<dbReference type="GO" id="GO:0005615">
    <property type="term" value="C:extracellular space"/>
    <property type="evidence" value="ECO:0000250"/>
    <property type="project" value="AgBase"/>
</dbReference>
<dbReference type="GO" id="GO:0005634">
    <property type="term" value="C:nucleus"/>
    <property type="evidence" value="ECO:0007669"/>
    <property type="project" value="UniProtKB-SubCell"/>
</dbReference>
<dbReference type="GO" id="GO:0001968">
    <property type="term" value="F:fibronectin binding"/>
    <property type="evidence" value="ECO:0000318"/>
    <property type="project" value="GO_Central"/>
</dbReference>
<dbReference type="GO" id="GO:0031994">
    <property type="term" value="F:insulin-like growth factor I binding"/>
    <property type="evidence" value="ECO:0000318"/>
    <property type="project" value="GO_Central"/>
</dbReference>
<dbReference type="GO" id="GO:0031995">
    <property type="term" value="F:insulin-like growth factor II binding"/>
    <property type="evidence" value="ECO:0000318"/>
    <property type="project" value="GO_Central"/>
</dbReference>
<dbReference type="GO" id="GO:0008160">
    <property type="term" value="F:protein tyrosine phosphatase activator activity"/>
    <property type="evidence" value="ECO:0000250"/>
    <property type="project" value="UniProtKB"/>
</dbReference>
<dbReference type="GO" id="GO:0006915">
    <property type="term" value="P:apoptotic process"/>
    <property type="evidence" value="ECO:0007669"/>
    <property type="project" value="UniProtKB-KW"/>
</dbReference>
<dbReference type="GO" id="GO:0043065">
    <property type="term" value="P:positive regulation of apoptotic process"/>
    <property type="evidence" value="ECO:0000250"/>
    <property type="project" value="UniProtKB"/>
</dbReference>
<dbReference type="GO" id="GO:0045663">
    <property type="term" value="P:positive regulation of myoblast differentiation"/>
    <property type="evidence" value="ECO:0000250"/>
    <property type="project" value="UniProtKB"/>
</dbReference>
<dbReference type="GO" id="GO:0043567">
    <property type="term" value="P:regulation of insulin-like growth factor receptor signaling pathway"/>
    <property type="evidence" value="ECO:0000318"/>
    <property type="project" value="GO_Central"/>
</dbReference>
<dbReference type="GO" id="GO:0032868">
    <property type="term" value="P:response to insulin"/>
    <property type="evidence" value="ECO:0000250"/>
    <property type="project" value="AgBase"/>
</dbReference>
<dbReference type="CDD" id="cd00191">
    <property type="entry name" value="TY"/>
    <property type="match status" value="1"/>
</dbReference>
<dbReference type="FunFam" id="4.10.40.20:FF:000001">
    <property type="entry name" value="Insulin-like growth factor binding protein 5"/>
    <property type="match status" value="1"/>
</dbReference>
<dbReference type="FunFam" id="4.10.800.10:FF:000005">
    <property type="entry name" value="Putative insulin-like growth factor-binding protein 5"/>
    <property type="match status" value="1"/>
</dbReference>
<dbReference type="Gene3D" id="4.10.40.20">
    <property type="match status" value="1"/>
</dbReference>
<dbReference type="Gene3D" id="4.10.800.10">
    <property type="entry name" value="Thyroglobulin type-1"/>
    <property type="match status" value="1"/>
</dbReference>
<dbReference type="InterPro" id="IPR009030">
    <property type="entry name" value="Growth_fac_rcpt_cys_sf"/>
</dbReference>
<dbReference type="InterPro" id="IPR012211">
    <property type="entry name" value="IGFBP-3"/>
</dbReference>
<dbReference type="InterPro" id="IPR000867">
    <property type="entry name" value="IGFBP-like"/>
</dbReference>
<dbReference type="InterPro" id="IPR022321">
    <property type="entry name" value="IGFBP_1-6_chordata"/>
</dbReference>
<dbReference type="InterPro" id="IPR017891">
    <property type="entry name" value="Insulin_GF-bd_Cys-rich_CS"/>
</dbReference>
<dbReference type="InterPro" id="IPR000716">
    <property type="entry name" value="Thyroglobulin_1"/>
</dbReference>
<dbReference type="InterPro" id="IPR036857">
    <property type="entry name" value="Thyroglobulin_1_sf"/>
</dbReference>
<dbReference type="PANTHER" id="PTHR11551">
    <property type="entry name" value="INSULIN-LIKE GROWTH FACTOR BINDING PROTEIN"/>
    <property type="match status" value="1"/>
</dbReference>
<dbReference type="PANTHER" id="PTHR11551:SF3">
    <property type="entry name" value="INSULIN-LIKE GROWTH FACTOR-BINDING PROTEIN 3"/>
    <property type="match status" value="1"/>
</dbReference>
<dbReference type="Pfam" id="PF00219">
    <property type="entry name" value="IGFBP"/>
    <property type="match status" value="1"/>
</dbReference>
<dbReference type="Pfam" id="PF00086">
    <property type="entry name" value="Thyroglobulin_1"/>
    <property type="match status" value="1"/>
</dbReference>
<dbReference type="PRINTS" id="PR01976">
    <property type="entry name" value="IGFBPFAMILY"/>
</dbReference>
<dbReference type="PRINTS" id="PR01979">
    <property type="entry name" value="IGFBPFAMILY3"/>
</dbReference>
<dbReference type="SMART" id="SM00121">
    <property type="entry name" value="IB"/>
    <property type="match status" value="1"/>
</dbReference>
<dbReference type="SMART" id="SM00211">
    <property type="entry name" value="TY"/>
    <property type="match status" value="1"/>
</dbReference>
<dbReference type="SUPFAM" id="SSF57184">
    <property type="entry name" value="Growth factor receptor domain"/>
    <property type="match status" value="1"/>
</dbReference>
<dbReference type="SUPFAM" id="SSF57610">
    <property type="entry name" value="Thyroglobulin type-1 domain"/>
    <property type="match status" value="1"/>
</dbReference>
<dbReference type="PROSITE" id="PS00222">
    <property type="entry name" value="IGFBP_N_1"/>
    <property type="match status" value="1"/>
</dbReference>
<dbReference type="PROSITE" id="PS51323">
    <property type="entry name" value="IGFBP_N_2"/>
    <property type="match status" value="1"/>
</dbReference>
<dbReference type="PROSITE" id="PS00484">
    <property type="entry name" value="THYROGLOBULIN_1_1"/>
    <property type="match status" value="1"/>
</dbReference>
<dbReference type="PROSITE" id="PS51162">
    <property type="entry name" value="THYROGLOBULIN_1_2"/>
    <property type="match status" value="1"/>
</dbReference>
<feature type="signal peptide" evidence="7">
    <location>
        <begin position="1"/>
        <end position="27"/>
    </location>
</feature>
<feature type="chain" id="PRO_0000045904" description="Insulin-like growth factor-binding protein 3">
    <location>
        <begin position="28"/>
        <end position="293"/>
    </location>
</feature>
<feature type="domain" description="IGFBP N-terminal" evidence="5">
    <location>
        <begin position="36"/>
        <end position="119"/>
    </location>
</feature>
<feature type="domain" description="Thyroglobulin type-1" evidence="4">
    <location>
        <begin position="212"/>
        <end position="287"/>
    </location>
</feature>
<feature type="region of interest" description="Disordered" evidence="6">
    <location>
        <begin position="132"/>
        <end position="166"/>
    </location>
</feature>
<feature type="region of interest" description="Disordered" evidence="6">
    <location>
        <begin position="178"/>
        <end position="213"/>
    </location>
</feature>
<feature type="compositionally biased region" description="Basic and acidic residues" evidence="6">
    <location>
        <begin position="178"/>
        <end position="192"/>
    </location>
</feature>
<feature type="compositionally biased region" description="Polar residues" evidence="6">
    <location>
        <begin position="193"/>
        <end position="204"/>
    </location>
</feature>
<feature type="modified residue" description="Phosphoserine" evidence="2">
    <location>
        <position position="150"/>
    </location>
</feature>
<feature type="modified residue" description="Phosphoserine" evidence="2">
    <location>
        <position position="203"/>
    </location>
</feature>
<feature type="glycosylation site" description="N-linked (GlcNAc...) asparagine" evidence="3">
    <location>
        <position position="118"/>
    </location>
</feature>
<feature type="glycosylation site" description="N-linked (GlcNAc...) asparagine" evidence="3">
    <location>
        <position position="138"/>
    </location>
</feature>
<feature type="glycosylation site" description="N-linked (GlcNAc...) asparagine" evidence="3">
    <location>
        <position position="201"/>
    </location>
</feature>
<feature type="disulfide bond" evidence="5">
    <location>
        <begin position="40"/>
        <end position="69"/>
    </location>
</feature>
<feature type="disulfide bond" evidence="5">
    <location>
        <begin position="43"/>
        <end position="71"/>
    </location>
</feature>
<feature type="disulfide bond" evidence="5">
    <location>
        <begin position="51"/>
        <end position="72"/>
    </location>
</feature>
<feature type="disulfide bond" evidence="5">
    <location>
        <begin position="60"/>
        <end position="75"/>
    </location>
</feature>
<feature type="disulfide bond" evidence="5">
    <location>
        <begin position="83"/>
        <end position="96"/>
    </location>
</feature>
<feature type="disulfide bond" evidence="5">
    <location>
        <begin position="90"/>
        <end position="116"/>
    </location>
</feature>
<feature type="disulfide bond" evidence="4">
    <location>
        <begin position="215"/>
        <end position="242"/>
    </location>
</feature>
<feature type="disulfide bond" evidence="4">
    <location>
        <begin position="253"/>
        <end position="264"/>
    </location>
</feature>
<feature type="disulfide bond" evidence="4">
    <location>
        <begin position="266"/>
        <end position="287"/>
    </location>
</feature>
<feature type="sequence conflict" description="In Ref. 1; AAF23229." evidence="8" ref="1">
    <original>P</original>
    <variation>S</variation>
    <location>
        <position position="23"/>
    </location>
</feature>
<feature type="sequence conflict" description="In Ref. 1 and 3." evidence="8" ref="1 3">
    <original>A</original>
    <variation>V</variation>
    <location>
        <position position="32"/>
    </location>
</feature>
<feature type="sequence conflict" description="In Ref. 1; AAF23229." evidence="8" ref="1">
    <original>V</original>
    <variation>I</variation>
    <location>
        <position position="170"/>
    </location>
</feature>
<evidence type="ECO:0000250" key="1"/>
<evidence type="ECO:0000250" key="2">
    <source>
        <dbReference type="UniProtKB" id="P17936"/>
    </source>
</evidence>
<evidence type="ECO:0000255" key="3"/>
<evidence type="ECO:0000255" key="4">
    <source>
        <dbReference type="PROSITE-ProRule" id="PRU00500"/>
    </source>
</evidence>
<evidence type="ECO:0000255" key="5">
    <source>
        <dbReference type="PROSITE-ProRule" id="PRU00653"/>
    </source>
</evidence>
<evidence type="ECO:0000256" key="6">
    <source>
        <dbReference type="SAM" id="MobiDB-lite"/>
    </source>
</evidence>
<evidence type="ECO:0000269" key="7">
    <source>
    </source>
</evidence>
<evidence type="ECO:0000305" key="8"/>